<feature type="chain" id="PRO_1000200125" description="UPF0102 protein Achl_2213">
    <location>
        <begin position="1"/>
        <end position="132"/>
    </location>
</feature>
<name>Y2213_PSECP</name>
<gene>
    <name type="ordered locus">Achl_2213</name>
</gene>
<comment type="similarity">
    <text evidence="1">Belongs to the UPF0102 family.</text>
</comment>
<evidence type="ECO:0000255" key="1">
    <source>
        <dbReference type="HAMAP-Rule" id="MF_00048"/>
    </source>
</evidence>
<dbReference type="EMBL" id="CP001341">
    <property type="protein sequence ID" value="ACL40180.1"/>
    <property type="molecule type" value="Genomic_DNA"/>
</dbReference>
<dbReference type="RefSeq" id="WP_015937396.1">
    <property type="nucleotide sequence ID" value="NC_011886.1"/>
</dbReference>
<dbReference type="SMR" id="B8HA88"/>
<dbReference type="STRING" id="452863.Achl_2213"/>
<dbReference type="KEGG" id="ach:Achl_2213"/>
<dbReference type="eggNOG" id="COG0792">
    <property type="taxonomic scope" value="Bacteria"/>
</dbReference>
<dbReference type="HOGENOM" id="CLU_115353_2_3_11"/>
<dbReference type="OrthoDB" id="9794876at2"/>
<dbReference type="Proteomes" id="UP000002505">
    <property type="component" value="Chromosome"/>
</dbReference>
<dbReference type="GO" id="GO:0003676">
    <property type="term" value="F:nucleic acid binding"/>
    <property type="evidence" value="ECO:0007669"/>
    <property type="project" value="InterPro"/>
</dbReference>
<dbReference type="CDD" id="cd20736">
    <property type="entry name" value="PoNe_Nuclease"/>
    <property type="match status" value="1"/>
</dbReference>
<dbReference type="Gene3D" id="3.40.1350.10">
    <property type="match status" value="1"/>
</dbReference>
<dbReference type="HAMAP" id="MF_00048">
    <property type="entry name" value="UPF0102"/>
    <property type="match status" value="1"/>
</dbReference>
<dbReference type="InterPro" id="IPR011335">
    <property type="entry name" value="Restrct_endonuc-II-like"/>
</dbReference>
<dbReference type="InterPro" id="IPR011856">
    <property type="entry name" value="tRNA_endonuc-like_dom_sf"/>
</dbReference>
<dbReference type="InterPro" id="IPR003509">
    <property type="entry name" value="UPF0102_YraN-like"/>
</dbReference>
<dbReference type="NCBIfam" id="NF009154">
    <property type="entry name" value="PRK12497.3-3"/>
    <property type="match status" value="1"/>
</dbReference>
<dbReference type="PANTHER" id="PTHR34039">
    <property type="entry name" value="UPF0102 PROTEIN YRAN"/>
    <property type="match status" value="1"/>
</dbReference>
<dbReference type="PANTHER" id="PTHR34039:SF1">
    <property type="entry name" value="UPF0102 PROTEIN YRAN"/>
    <property type="match status" value="1"/>
</dbReference>
<dbReference type="Pfam" id="PF02021">
    <property type="entry name" value="UPF0102"/>
    <property type="match status" value="1"/>
</dbReference>
<dbReference type="SUPFAM" id="SSF52980">
    <property type="entry name" value="Restriction endonuclease-like"/>
    <property type="match status" value="1"/>
</dbReference>
<accession>B8HA88</accession>
<sequence>MKAKDLLGRHGEDLAVGYLETLGMLIVERNWRCSEGEIDVVALDGDALVIAEVKTRRSLDYGHPFEAVGPDKLARLHRLGAAWCRDRELRMPLRRVDVIAVVDDGGGSPVVEHLKGVAEWRSDAPILWRSWA</sequence>
<reference key="1">
    <citation type="submission" date="2009-01" db="EMBL/GenBank/DDBJ databases">
        <title>Complete sequence of chromosome of Arthrobacter chlorophenolicus A6.</title>
        <authorList>
            <consortium name="US DOE Joint Genome Institute"/>
            <person name="Lucas S."/>
            <person name="Copeland A."/>
            <person name="Lapidus A."/>
            <person name="Glavina del Rio T."/>
            <person name="Tice H."/>
            <person name="Bruce D."/>
            <person name="Goodwin L."/>
            <person name="Pitluck S."/>
            <person name="Goltsman E."/>
            <person name="Clum A."/>
            <person name="Larimer F."/>
            <person name="Land M."/>
            <person name="Hauser L."/>
            <person name="Kyrpides N."/>
            <person name="Mikhailova N."/>
            <person name="Jansson J."/>
            <person name="Richardson P."/>
        </authorList>
    </citation>
    <scope>NUCLEOTIDE SEQUENCE [LARGE SCALE GENOMIC DNA]</scope>
    <source>
        <strain>ATCC 700700 / DSM 12829 / CIP 107037 / JCM 12360 / KCTC 9906 / NCIMB 13794 / A6</strain>
    </source>
</reference>
<organism>
    <name type="scientific">Pseudarthrobacter chlorophenolicus (strain ATCC 700700 / DSM 12829 / CIP 107037 / JCM 12360 / KCTC 9906 / NCIMB 13794 / A6)</name>
    <name type="common">Arthrobacter chlorophenolicus</name>
    <dbReference type="NCBI Taxonomy" id="452863"/>
    <lineage>
        <taxon>Bacteria</taxon>
        <taxon>Bacillati</taxon>
        <taxon>Actinomycetota</taxon>
        <taxon>Actinomycetes</taxon>
        <taxon>Micrococcales</taxon>
        <taxon>Micrococcaceae</taxon>
        <taxon>Pseudarthrobacter</taxon>
    </lineage>
</organism>
<proteinExistence type="inferred from homology"/>
<protein>
    <recommendedName>
        <fullName evidence="1">UPF0102 protein Achl_2213</fullName>
    </recommendedName>
</protein>